<feature type="chain" id="PRO_0000267847" description="Large ribosomal subunit protein bL17">
    <location>
        <begin position="1"/>
        <end position="131"/>
    </location>
</feature>
<gene>
    <name evidence="1" type="primary">rplQ</name>
    <name type="ordered locus">Bcep18194_A3474</name>
</gene>
<sequence length="131" mass="15050">MRHRHGLRKLNRTSSHRLAMLRNMSNSLIEHEVIKTTLPKAKELRKVVEPLITLGKKPSLANRRLAFNRLRDRDSVAKLFDVLGPRFANRPGGYLRVLKFGFRVGDNAPMALVELLDRPEVDETENVQEAE</sequence>
<proteinExistence type="inferred from homology"/>
<comment type="subunit">
    <text evidence="1">Part of the 50S ribosomal subunit. Contacts protein L32.</text>
</comment>
<comment type="similarity">
    <text evidence="1">Belongs to the bacterial ribosomal protein bL17 family.</text>
</comment>
<dbReference type="EMBL" id="CP000151">
    <property type="protein sequence ID" value="ABB07076.1"/>
    <property type="molecule type" value="Genomic_DNA"/>
</dbReference>
<dbReference type="RefSeq" id="WP_006477175.1">
    <property type="nucleotide sequence ID" value="NZ_WNDV01000034.1"/>
</dbReference>
<dbReference type="SMR" id="Q39KE0"/>
<dbReference type="GeneID" id="98107133"/>
<dbReference type="KEGG" id="bur:Bcep18194_A3474"/>
<dbReference type="HOGENOM" id="CLU_074407_2_0_4"/>
<dbReference type="Proteomes" id="UP000002705">
    <property type="component" value="Chromosome 1"/>
</dbReference>
<dbReference type="GO" id="GO:0022625">
    <property type="term" value="C:cytosolic large ribosomal subunit"/>
    <property type="evidence" value="ECO:0007669"/>
    <property type="project" value="TreeGrafter"/>
</dbReference>
<dbReference type="GO" id="GO:0003735">
    <property type="term" value="F:structural constituent of ribosome"/>
    <property type="evidence" value="ECO:0007669"/>
    <property type="project" value="InterPro"/>
</dbReference>
<dbReference type="GO" id="GO:0006412">
    <property type="term" value="P:translation"/>
    <property type="evidence" value="ECO:0007669"/>
    <property type="project" value="UniProtKB-UniRule"/>
</dbReference>
<dbReference type="FunFam" id="3.90.1030.10:FF:000001">
    <property type="entry name" value="50S ribosomal protein L17"/>
    <property type="match status" value="1"/>
</dbReference>
<dbReference type="Gene3D" id="3.90.1030.10">
    <property type="entry name" value="Ribosomal protein L17"/>
    <property type="match status" value="1"/>
</dbReference>
<dbReference type="HAMAP" id="MF_01368">
    <property type="entry name" value="Ribosomal_bL17"/>
    <property type="match status" value="1"/>
</dbReference>
<dbReference type="InterPro" id="IPR000456">
    <property type="entry name" value="Ribosomal_bL17"/>
</dbReference>
<dbReference type="InterPro" id="IPR047859">
    <property type="entry name" value="Ribosomal_bL17_CS"/>
</dbReference>
<dbReference type="InterPro" id="IPR036373">
    <property type="entry name" value="Ribosomal_bL17_sf"/>
</dbReference>
<dbReference type="NCBIfam" id="TIGR00059">
    <property type="entry name" value="L17"/>
    <property type="match status" value="1"/>
</dbReference>
<dbReference type="PANTHER" id="PTHR14413:SF16">
    <property type="entry name" value="LARGE RIBOSOMAL SUBUNIT PROTEIN BL17M"/>
    <property type="match status" value="1"/>
</dbReference>
<dbReference type="PANTHER" id="PTHR14413">
    <property type="entry name" value="RIBOSOMAL PROTEIN L17"/>
    <property type="match status" value="1"/>
</dbReference>
<dbReference type="Pfam" id="PF01196">
    <property type="entry name" value="Ribosomal_L17"/>
    <property type="match status" value="1"/>
</dbReference>
<dbReference type="SUPFAM" id="SSF64263">
    <property type="entry name" value="Prokaryotic ribosomal protein L17"/>
    <property type="match status" value="1"/>
</dbReference>
<dbReference type="PROSITE" id="PS01167">
    <property type="entry name" value="RIBOSOMAL_L17"/>
    <property type="match status" value="1"/>
</dbReference>
<accession>Q39KE0</accession>
<reference key="1">
    <citation type="submission" date="2005-10" db="EMBL/GenBank/DDBJ databases">
        <title>Complete sequence of chromosome 1 of Burkholderia sp. 383.</title>
        <authorList>
            <consortium name="US DOE Joint Genome Institute"/>
            <person name="Copeland A."/>
            <person name="Lucas S."/>
            <person name="Lapidus A."/>
            <person name="Barry K."/>
            <person name="Detter J.C."/>
            <person name="Glavina T."/>
            <person name="Hammon N."/>
            <person name="Israni S."/>
            <person name="Pitluck S."/>
            <person name="Chain P."/>
            <person name="Malfatti S."/>
            <person name="Shin M."/>
            <person name="Vergez L."/>
            <person name="Schmutz J."/>
            <person name="Larimer F."/>
            <person name="Land M."/>
            <person name="Kyrpides N."/>
            <person name="Lykidis A."/>
            <person name="Richardson P."/>
        </authorList>
    </citation>
    <scope>NUCLEOTIDE SEQUENCE [LARGE SCALE GENOMIC DNA]</scope>
    <source>
        <strain>ATCC 17760 / DSM 23089 / LMG 22485 / NCIMB 9086 / R18194 / 383</strain>
    </source>
</reference>
<protein>
    <recommendedName>
        <fullName evidence="1">Large ribosomal subunit protein bL17</fullName>
    </recommendedName>
    <alternativeName>
        <fullName evidence="2">50S ribosomal protein L17</fullName>
    </alternativeName>
</protein>
<organism>
    <name type="scientific">Burkholderia lata (strain ATCC 17760 / DSM 23089 / LMG 22485 / NCIMB 9086 / R18194 / 383)</name>
    <dbReference type="NCBI Taxonomy" id="482957"/>
    <lineage>
        <taxon>Bacteria</taxon>
        <taxon>Pseudomonadati</taxon>
        <taxon>Pseudomonadota</taxon>
        <taxon>Betaproteobacteria</taxon>
        <taxon>Burkholderiales</taxon>
        <taxon>Burkholderiaceae</taxon>
        <taxon>Burkholderia</taxon>
        <taxon>Burkholderia cepacia complex</taxon>
    </lineage>
</organism>
<name>RL17_BURL3</name>
<keyword id="KW-0687">Ribonucleoprotein</keyword>
<keyword id="KW-0689">Ribosomal protein</keyword>
<evidence type="ECO:0000255" key="1">
    <source>
        <dbReference type="HAMAP-Rule" id="MF_01368"/>
    </source>
</evidence>
<evidence type="ECO:0000305" key="2"/>